<keyword id="KW-0963">Cytoplasm</keyword>
<keyword id="KW-0396">Initiation factor</keyword>
<keyword id="KW-0648">Protein biosynthesis</keyword>
<keyword id="KW-1185">Reference proteome</keyword>
<gene>
    <name type="ORF">GF25000</name>
</gene>
<organism>
    <name type="scientific">Drosophila ananassae</name>
    <name type="common">Fruit fly</name>
    <dbReference type="NCBI Taxonomy" id="7217"/>
    <lineage>
        <taxon>Eukaryota</taxon>
        <taxon>Metazoa</taxon>
        <taxon>Ecdysozoa</taxon>
        <taxon>Arthropoda</taxon>
        <taxon>Hexapoda</taxon>
        <taxon>Insecta</taxon>
        <taxon>Pterygota</taxon>
        <taxon>Neoptera</taxon>
        <taxon>Endopterygota</taxon>
        <taxon>Diptera</taxon>
        <taxon>Brachycera</taxon>
        <taxon>Muscomorpha</taxon>
        <taxon>Ephydroidea</taxon>
        <taxon>Drosophilidae</taxon>
        <taxon>Drosophila</taxon>
        <taxon>Sophophora</taxon>
    </lineage>
</organism>
<protein>
    <recommendedName>
        <fullName evidence="1">Eukaryotic translation initiation factor 3 subunit L</fullName>
        <shortName evidence="1">eIF3l</shortName>
    </recommendedName>
</protein>
<reference key="1">
    <citation type="journal article" date="2007" name="Nature">
        <title>Evolution of genes and genomes on the Drosophila phylogeny.</title>
        <authorList>
            <consortium name="Drosophila 12 genomes consortium"/>
        </authorList>
    </citation>
    <scope>NUCLEOTIDE SEQUENCE [LARGE SCALE GENOMIC DNA]</scope>
    <source>
        <strain>Tucson 14024-0371.13</strain>
    </source>
</reference>
<sequence length="539" mass="63053">MYGGDDYGNNAEYYDEYAHTGDPQLDMEYERNYYASRMPENVKYFLINFCQAIKEGTLYDIQNMYENTFPQISDHHFDKSAWPDEQEVGPIVDNDKVFLILYKELYYRHIHARIPGGPKLDQRINSFFNYCDFFNLIISSQNPVMLELPDIWLWELVDEFVYQFQNFAQYRARLTDKSQDEIQQLCVNHSNVWSILCILNVLHSLVDISNIKKQLEAISQGADPQTVAGDFGKLSFYKMLGYFSLVGLLRVHSLLGDYYQAIKVLEPIEIHKKSAYSHIPACQISTSYYVGFAYMMMRRYADAIRTFSDILLYIQRTKQLYSTRSYQNDQINKQAEQMYHLLAICLVLHPQCIDESIQQVLREKNYHDAMFKMQCGDLDVFKSFFVFACPRFVSPCPPAADAPMEDYVKDPMEHQLMVFMDEVRQQKDLPTTRSYLKLYTTLPLAKLASFIDPNASDDDVSKLLIRLLCFKHKMRNLVWSKGPSGLEGAFKSGSELDFYIDDDMIHIADTKVSHRYGDFFVRKILKFNDLNRKLKKITI</sequence>
<accession>B3M7W0</accession>
<comment type="function">
    <text evidence="1">Component of the eukaryotic translation initiation factor 3 (eIF-3) complex, which is involved in protein synthesis of a specialized repertoire of mRNAs and, together with other initiation factors, stimulates binding of mRNA and methionyl-tRNAi to the 40S ribosome. The eIF-3 complex specifically targets and initiates translation of a subset of mRNAs involved in cell proliferation.</text>
</comment>
<comment type="subunit">
    <text evidence="1">Component of the eukaryotic translation initiation factor 3 (eIF-3) complex. The eIF-3 complex interacts with pix.</text>
</comment>
<comment type="subcellular location">
    <subcellularLocation>
        <location evidence="1">Cytoplasm</location>
    </subcellularLocation>
</comment>
<comment type="similarity">
    <text evidence="1">Belongs to the eIF-3 subunit L family.</text>
</comment>
<proteinExistence type="inferred from homology"/>
<evidence type="ECO:0000255" key="1">
    <source>
        <dbReference type="HAMAP-Rule" id="MF_03011"/>
    </source>
</evidence>
<evidence type="ECO:0000255" key="2">
    <source>
        <dbReference type="PROSITE-ProRule" id="PRU01185"/>
    </source>
</evidence>
<dbReference type="EMBL" id="CH902618">
    <property type="protein sequence ID" value="EDV38833.1"/>
    <property type="molecule type" value="Genomic_DNA"/>
</dbReference>
<dbReference type="SMR" id="B3M7W0"/>
<dbReference type="FunCoup" id="B3M7W0">
    <property type="interactions" value="1971"/>
</dbReference>
<dbReference type="STRING" id="7217.B3M7W0"/>
<dbReference type="EnsemblMetazoa" id="FBtr0129700">
    <property type="protein sequence ID" value="FBpp0128192"/>
    <property type="gene ID" value="FBgn0101992"/>
</dbReference>
<dbReference type="EnsemblMetazoa" id="XM_001955991.4">
    <property type="protein sequence ID" value="XP_001956027.1"/>
    <property type="gene ID" value="LOC6507626"/>
</dbReference>
<dbReference type="GeneID" id="6507626"/>
<dbReference type="KEGG" id="dan:6507626"/>
<dbReference type="CTD" id="51386"/>
<dbReference type="eggNOG" id="KOG3677">
    <property type="taxonomic scope" value="Eukaryota"/>
</dbReference>
<dbReference type="HOGENOM" id="CLU_029210_0_1_1"/>
<dbReference type="InParanoid" id="B3M7W0"/>
<dbReference type="OMA" id="AGWFIRN"/>
<dbReference type="OrthoDB" id="15082at2759"/>
<dbReference type="PhylomeDB" id="B3M7W0"/>
<dbReference type="Proteomes" id="UP000007801">
    <property type="component" value="Unassembled WGS sequence"/>
</dbReference>
<dbReference type="GO" id="GO:0016282">
    <property type="term" value="C:eukaryotic 43S preinitiation complex"/>
    <property type="evidence" value="ECO:0007669"/>
    <property type="project" value="UniProtKB-UniRule"/>
</dbReference>
<dbReference type="GO" id="GO:0033290">
    <property type="term" value="C:eukaryotic 48S preinitiation complex"/>
    <property type="evidence" value="ECO:0007669"/>
    <property type="project" value="UniProtKB-UniRule"/>
</dbReference>
<dbReference type="GO" id="GO:0005852">
    <property type="term" value="C:eukaryotic translation initiation factor 3 complex"/>
    <property type="evidence" value="ECO:0007669"/>
    <property type="project" value="UniProtKB-UniRule"/>
</dbReference>
<dbReference type="GO" id="GO:0003743">
    <property type="term" value="F:translation initiation factor activity"/>
    <property type="evidence" value="ECO:0007669"/>
    <property type="project" value="UniProtKB-UniRule"/>
</dbReference>
<dbReference type="GO" id="GO:0001732">
    <property type="term" value="P:formation of cytoplasmic translation initiation complex"/>
    <property type="evidence" value="ECO:0007669"/>
    <property type="project" value="UniProtKB-UniRule"/>
</dbReference>
<dbReference type="HAMAP" id="MF_03011">
    <property type="entry name" value="eIF3l"/>
    <property type="match status" value="1"/>
</dbReference>
<dbReference type="InterPro" id="IPR019382">
    <property type="entry name" value="eIF3l"/>
</dbReference>
<dbReference type="InterPro" id="IPR000717">
    <property type="entry name" value="PCI_dom"/>
</dbReference>
<dbReference type="InterPro" id="IPR011990">
    <property type="entry name" value="TPR-like_helical_dom_sf"/>
</dbReference>
<dbReference type="PANTHER" id="PTHR13242">
    <property type="entry name" value="EUKARYOTIC TRANSLATION INITIATION FACTOR 3"/>
    <property type="match status" value="1"/>
</dbReference>
<dbReference type="PANTHER" id="PTHR13242:SF0">
    <property type="entry name" value="EUKARYOTIC TRANSLATION INITIATION FACTOR 3 SUBUNIT L"/>
    <property type="match status" value="1"/>
</dbReference>
<dbReference type="Pfam" id="PF10255">
    <property type="entry name" value="Paf67"/>
    <property type="match status" value="1"/>
</dbReference>
<dbReference type="SUPFAM" id="SSF48452">
    <property type="entry name" value="TPR-like"/>
    <property type="match status" value="1"/>
</dbReference>
<dbReference type="PROSITE" id="PS50250">
    <property type="entry name" value="PCI"/>
    <property type="match status" value="1"/>
</dbReference>
<name>EIF3L_DROAN</name>
<feature type="chain" id="PRO_0000364242" description="Eukaryotic translation initiation factor 3 subunit L">
    <location>
        <begin position="1"/>
        <end position="539"/>
    </location>
</feature>
<feature type="domain" description="PCI" evidence="2">
    <location>
        <begin position="306"/>
        <end position="514"/>
    </location>
</feature>